<reference key="1">
    <citation type="journal article" date="2002" name="Science">
        <title>50 million years of genomic stasis in endosymbiotic bacteria.</title>
        <authorList>
            <person name="Tamas I."/>
            <person name="Klasson L."/>
            <person name="Canbaeck B."/>
            <person name="Naeslund A.K."/>
            <person name="Eriksson A.-S."/>
            <person name="Wernegreen J.J."/>
            <person name="Sandstroem J.P."/>
            <person name="Moran N.A."/>
            <person name="Andersson S.G.E."/>
        </authorList>
    </citation>
    <scope>NUCLEOTIDE SEQUENCE [LARGE SCALE GENOMIC DNA]</scope>
    <source>
        <strain>Sg</strain>
    </source>
</reference>
<name>RL22_BUCAP</name>
<sequence>METLAQHRQARCSAQKIRLIADLIRGKKVPKALNILNFNNKKAAILVKKVLESALANAEHNDGLDVDQLRIKNIFVDEGSTMKRMMPRAKGRADRILKRTSHITVIVSDR</sequence>
<gene>
    <name evidence="1" type="primary">rplV</name>
    <name type="ordered locus">BUsg_500</name>
</gene>
<organism>
    <name type="scientific">Buchnera aphidicola subsp. Schizaphis graminum (strain Sg)</name>
    <dbReference type="NCBI Taxonomy" id="198804"/>
    <lineage>
        <taxon>Bacteria</taxon>
        <taxon>Pseudomonadati</taxon>
        <taxon>Pseudomonadota</taxon>
        <taxon>Gammaproteobacteria</taxon>
        <taxon>Enterobacterales</taxon>
        <taxon>Erwiniaceae</taxon>
        <taxon>Buchnera</taxon>
    </lineage>
</organism>
<comment type="function">
    <text evidence="1">This protein binds specifically to 23S rRNA; its binding is stimulated by other ribosomal proteins, e.g. L4, L17, and L20. It is important during the early stages of 50S assembly. It makes multiple contacts with different domains of the 23S rRNA in the assembled 50S subunit and ribosome (By similarity).</text>
</comment>
<comment type="function">
    <text evidence="1">The globular domain of the protein is located near the polypeptide exit tunnel on the outside of the subunit, while an extended beta-hairpin is found that lines the wall of the exit tunnel in the center of the 70S ribosome.</text>
</comment>
<comment type="subunit">
    <text evidence="1">Part of the 50S ribosomal subunit.</text>
</comment>
<comment type="similarity">
    <text evidence="1">Belongs to the universal ribosomal protein uL22 family.</text>
</comment>
<keyword id="KW-0687">Ribonucleoprotein</keyword>
<keyword id="KW-0689">Ribosomal protein</keyword>
<keyword id="KW-0694">RNA-binding</keyword>
<keyword id="KW-0699">rRNA-binding</keyword>
<accession>Q8K955</accession>
<protein>
    <recommendedName>
        <fullName evidence="1">Large ribosomal subunit protein uL22</fullName>
    </recommendedName>
    <alternativeName>
        <fullName evidence="2">50S ribosomal protein L22</fullName>
    </alternativeName>
</protein>
<proteinExistence type="inferred from homology"/>
<dbReference type="EMBL" id="AE013218">
    <property type="protein sequence ID" value="AAM68043.1"/>
    <property type="molecule type" value="Genomic_DNA"/>
</dbReference>
<dbReference type="RefSeq" id="WP_011054009.1">
    <property type="nucleotide sequence ID" value="NC_004061.1"/>
</dbReference>
<dbReference type="SMR" id="Q8K955"/>
<dbReference type="STRING" id="198804.BUsg_500"/>
<dbReference type="GeneID" id="93003975"/>
<dbReference type="KEGG" id="bas:BUsg_500"/>
<dbReference type="eggNOG" id="COG0091">
    <property type="taxonomic scope" value="Bacteria"/>
</dbReference>
<dbReference type="HOGENOM" id="CLU_083987_3_3_6"/>
<dbReference type="Proteomes" id="UP000000416">
    <property type="component" value="Chromosome"/>
</dbReference>
<dbReference type="GO" id="GO:0022625">
    <property type="term" value="C:cytosolic large ribosomal subunit"/>
    <property type="evidence" value="ECO:0007669"/>
    <property type="project" value="TreeGrafter"/>
</dbReference>
<dbReference type="GO" id="GO:0019843">
    <property type="term" value="F:rRNA binding"/>
    <property type="evidence" value="ECO:0007669"/>
    <property type="project" value="UniProtKB-UniRule"/>
</dbReference>
<dbReference type="GO" id="GO:0003735">
    <property type="term" value="F:structural constituent of ribosome"/>
    <property type="evidence" value="ECO:0007669"/>
    <property type="project" value="InterPro"/>
</dbReference>
<dbReference type="GO" id="GO:0006412">
    <property type="term" value="P:translation"/>
    <property type="evidence" value="ECO:0007669"/>
    <property type="project" value="UniProtKB-UniRule"/>
</dbReference>
<dbReference type="CDD" id="cd00336">
    <property type="entry name" value="Ribosomal_L22"/>
    <property type="match status" value="1"/>
</dbReference>
<dbReference type="FunFam" id="3.90.470.10:FF:000001">
    <property type="entry name" value="50S ribosomal protein L22"/>
    <property type="match status" value="1"/>
</dbReference>
<dbReference type="Gene3D" id="3.90.470.10">
    <property type="entry name" value="Ribosomal protein L22/L17"/>
    <property type="match status" value="1"/>
</dbReference>
<dbReference type="HAMAP" id="MF_01331_B">
    <property type="entry name" value="Ribosomal_uL22_B"/>
    <property type="match status" value="1"/>
</dbReference>
<dbReference type="InterPro" id="IPR001063">
    <property type="entry name" value="Ribosomal_uL22"/>
</dbReference>
<dbReference type="InterPro" id="IPR005727">
    <property type="entry name" value="Ribosomal_uL22_bac/chlpt-type"/>
</dbReference>
<dbReference type="InterPro" id="IPR047867">
    <property type="entry name" value="Ribosomal_uL22_bac/org-type"/>
</dbReference>
<dbReference type="InterPro" id="IPR018260">
    <property type="entry name" value="Ribosomal_uL22_CS"/>
</dbReference>
<dbReference type="InterPro" id="IPR036394">
    <property type="entry name" value="Ribosomal_uL22_sf"/>
</dbReference>
<dbReference type="NCBIfam" id="TIGR01044">
    <property type="entry name" value="rplV_bact"/>
    <property type="match status" value="1"/>
</dbReference>
<dbReference type="PANTHER" id="PTHR13501">
    <property type="entry name" value="CHLOROPLAST 50S RIBOSOMAL PROTEIN L22-RELATED"/>
    <property type="match status" value="1"/>
</dbReference>
<dbReference type="PANTHER" id="PTHR13501:SF8">
    <property type="entry name" value="LARGE RIBOSOMAL SUBUNIT PROTEIN UL22M"/>
    <property type="match status" value="1"/>
</dbReference>
<dbReference type="Pfam" id="PF00237">
    <property type="entry name" value="Ribosomal_L22"/>
    <property type="match status" value="1"/>
</dbReference>
<dbReference type="SUPFAM" id="SSF54843">
    <property type="entry name" value="Ribosomal protein L22"/>
    <property type="match status" value="1"/>
</dbReference>
<dbReference type="PROSITE" id="PS00464">
    <property type="entry name" value="RIBOSOMAL_L22"/>
    <property type="match status" value="1"/>
</dbReference>
<evidence type="ECO:0000255" key="1">
    <source>
        <dbReference type="HAMAP-Rule" id="MF_01331"/>
    </source>
</evidence>
<evidence type="ECO:0000305" key="2"/>
<feature type="chain" id="PRO_0000125131" description="Large ribosomal subunit protein uL22">
    <location>
        <begin position="1"/>
        <end position="110"/>
    </location>
</feature>